<reference key="1">
    <citation type="submission" date="2003-05" db="EMBL/GenBank/DDBJ databases">
        <authorList>
            <person name="Dietrich F.S."/>
            <person name="Ray C.A."/>
            <person name="Sharma D.A."/>
            <person name="Allen A."/>
            <person name="Pickup D.J."/>
        </authorList>
    </citation>
    <scope>NUCLEOTIDE SEQUENCE [LARGE SCALE GENOMIC DNA]</scope>
    <source>
        <strain>Brighton Red</strain>
    </source>
</reference>
<feature type="chain" id="PRO_0000396131" description="Kelch repeat and BTB domain-containing protein 2">
    <location>
        <begin position="1"/>
        <end position="557"/>
    </location>
</feature>
<feature type="domain" description="BTB" evidence="2">
    <location>
        <begin position="26"/>
        <end position="95"/>
    </location>
</feature>
<feature type="domain" description="BACK">
    <location>
        <begin position="143"/>
        <end position="223"/>
    </location>
</feature>
<feature type="repeat" description="Kelch 1">
    <location>
        <begin position="305"/>
        <end position="352"/>
    </location>
</feature>
<feature type="repeat" description="Kelch 2">
    <location>
        <begin position="353"/>
        <end position="399"/>
    </location>
</feature>
<feature type="repeat" description="Kelch 3">
    <location>
        <begin position="415"/>
        <end position="464"/>
    </location>
</feature>
<sequence>MDIENDIRNRRIIRNISNLLDDDILCDVIITIRDGEEIKAHKTILAAGSTYFKTMFTTPMIARDLVTRVNLQMFDKDAVKNIVQYLYNRHISSMNVIDVLKCADYLLIDDLVADCESYIKDYTNHDTCICMYHKLYEMIHIPIVKYIKRMLMSNIPTLITTDAFKKTVFEILFDIISTNDNVYLYREGYKVTILLKWLEHNYITEEQLLCILSCIDIQNLDKKSRLLLYSNKTINMYPSCIQFLIDNKQNRNIIPRQLCLVCHDTKYNVCNPCILVYNINTMEYSVISTIPNHIINYASAIVDNEIIIAGGYNFNNPSLNKVYKINIENKIHVELPPMIKNRCRFSLAVIDDTIYAIGGQNGTNVERTIECYTMGDDKWKLLPDMPIALSSYGMCVLDQYIYIIGGSTLYIDYTSVHAVNSIDMEEDTDTSNKVIRYDTVNNIWETLPNFWTGTIKPGVVSHEDDIYVVCDIKDEKNVKTCIFRYNTNTYNGWELVTTTESRLSALHTILHDNTIMMLHCYESYMLQDTFNVYTREWNHTCHQHSNSYIMHNILPIY</sequence>
<organism>
    <name type="scientific">Cowpox virus (strain Brighton Red)</name>
    <name type="common">CPV</name>
    <dbReference type="NCBI Taxonomy" id="265872"/>
    <lineage>
        <taxon>Viruses</taxon>
        <taxon>Varidnaviria</taxon>
        <taxon>Bamfordvirae</taxon>
        <taxon>Nucleocytoviricota</taxon>
        <taxon>Pokkesviricetes</taxon>
        <taxon>Chitovirales</taxon>
        <taxon>Poxviridae</taxon>
        <taxon>Chordopoxvirinae</taxon>
        <taxon>Orthopoxvirus</taxon>
        <taxon>Cowpox virus</taxon>
    </lineage>
</organism>
<dbReference type="EMBL" id="AF482758">
    <property type="protein sequence ID" value="AAM13653.1"/>
    <property type="molecule type" value="Genomic_DNA"/>
</dbReference>
<dbReference type="SMR" id="Q8QMN3"/>
<dbReference type="KEGG" id="vg:1486094"/>
<dbReference type="Proteomes" id="UP000152733">
    <property type="component" value="Segment"/>
</dbReference>
<dbReference type="GO" id="GO:0030430">
    <property type="term" value="C:host cell cytoplasm"/>
    <property type="evidence" value="ECO:0007669"/>
    <property type="project" value="UniProtKB-SubCell"/>
</dbReference>
<dbReference type="GO" id="GO:0039648">
    <property type="term" value="P:symbiont-mediated perturbation of host ubiquitin-like protein modification"/>
    <property type="evidence" value="ECO:0007669"/>
    <property type="project" value="UniProtKB-KW"/>
</dbReference>
<dbReference type="CDD" id="cd18186">
    <property type="entry name" value="BTB_POZ_ZBTB_KLHL-like"/>
    <property type="match status" value="1"/>
</dbReference>
<dbReference type="Gene3D" id="2.120.10.80">
    <property type="entry name" value="Kelch-type beta propeller"/>
    <property type="match status" value="1"/>
</dbReference>
<dbReference type="Gene3D" id="3.30.710.10">
    <property type="entry name" value="Potassium Channel Kv1.1, Chain A"/>
    <property type="match status" value="1"/>
</dbReference>
<dbReference type="InterPro" id="IPR011705">
    <property type="entry name" value="BACK"/>
</dbReference>
<dbReference type="InterPro" id="IPR000210">
    <property type="entry name" value="BTB/POZ_dom"/>
</dbReference>
<dbReference type="InterPro" id="IPR015915">
    <property type="entry name" value="Kelch-typ_b-propeller"/>
</dbReference>
<dbReference type="InterPro" id="IPR006652">
    <property type="entry name" value="Kelch_1"/>
</dbReference>
<dbReference type="InterPro" id="IPR011333">
    <property type="entry name" value="SKP1/BTB/POZ_sf"/>
</dbReference>
<dbReference type="PANTHER" id="PTHR45632:SF3">
    <property type="entry name" value="KELCH-LIKE PROTEIN 32"/>
    <property type="match status" value="1"/>
</dbReference>
<dbReference type="PANTHER" id="PTHR45632">
    <property type="entry name" value="LD33804P"/>
    <property type="match status" value="1"/>
</dbReference>
<dbReference type="Pfam" id="PF07707">
    <property type="entry name" value="BACK"/>
    <property type="match status" value="1"/>
</dbReference>
<dbReference type="Pfam" id="PF00651">
    <property type="entry name" value="BTB"/>
    <property type="match status" value="1"/>
</dbReference>
<dbReference type="Pfam" id="PF01344">
    <property type="entry name" value="Kelch_1"/>
    <property type="match status" value="2"/>
</dbReference>
<dbReference type="Pfam" id="PF13964">
    <property type="entry name" value="Kelch_6"/>
    <property type="match status" value="1"/>
</dbReference>
<dbReference type="SMART" id="SM00225">
    <property type="entry name" value="BTB"/>
    <property type="match status" value="1"/>
</dbReference>
<dbReference type="SMART" id="SM00612">
    <property type="entry name" value="Kelch"/>
    <property type="match status" value="3"/>
</dbReference>
<dbReference type="SUPFAM" id="SSF117281">
    <property type="entry name" value="Kelch motif"/>
    <property type="match status" value="1"/>
</dbReference>
<dbReference type="SUPFAM" id="SSF54695">
    <property type="entry name" value="POZ domain"/>
    <property type="match status" value="1"/>
</dbReference>
<dbReference type="PROSITE" id="PS50097">
    <property type="entry name" value="BTB"/>
    <property type="match status" value="1"/>
</dbReference>
<evidence type="ECO:0000250" key="1"/>
<evidence type="ECO:0000255" key="2">
    <source>
        <dbReference type="PROSITE-ProRule" id="PRU00037"/>
    </source>
</evidence>
<proteinExistence type="inferred from homology"/>
<gene>
    <name type="primary">KBTB2</name>
    <name type="ordered locus">CPXV215</name>
</gene>
<organismHost>
    <name type="scientific">Bos taurus</name>
    <name type="common">Bovine</name>
    <dbReference type="NCBI Taxonomy" id="9913"/>
</organismHost>
<organismHost>
    <name type="scientific">Felis catus</name>
    <name type="common">Cat</name>
    <name type="synonym">Felis silvestris catus</name>
    <dbReference type="NCBI Taxonomy" id="9685"/>
</organismHost>
<organismHost>
    <name type="scientific">Homo sapiens</name>
    <name type="common">Human</name>
    <dbReference type="NCBI Taxonomy" id="9606"/>
</organismHost>
<organismHost>
    <name type="scientific">Loxodonta africana</name>
    <name type="common">African elephant</name>
    <dbReference type="NCBI Taxonomy" id="9785"/>
</organismHost>
<organismHost>
    <name type="scientific">Microtus agrestis</name>
    <name type="common">Short-tailed field vole</name>
    <dbReference type="NCBI Taxonomy" id="29092"/>
</organismHost>
<organismHost>
    <name type="scientific">Mus musculus</name>
    <name type="common">Mouse</name>
    <dbReference type="NCBI Taxonomy" id="10090"/>
</organismHost>
<organismHost>
    <name type="scientific">Myodes glareolus</name>
    <name type="common">Bank vole</name>
    <name type="synonym">Clethrionomys glareolus</name>
    <dbReference type="NCBI Taxonomy" id="447135"/>
</organismHost>
<name>KBTB2_CWPXB</name>
<protein>
    <recommendedName>
        <fullName>Kelch repeat and BTB domain-containing protein 2</fullName>
    </recommendedName>
</protein>
<accession>Q8QMN3</accession>
<keyword id="KW-1035">Host cytoplasm</keyword>
<keyword id="KW-0945">Host-virus interaction</keyword>
<keyword id="KW-0880">Kelch repeat</keyword>
<keyword id="KW-1123">Modulation of host E3 ubiquitin ligases by virus</keyword>
<keyword id="KW-1130">Modulation of host ubiquitin pathway by virus</keyword>
<keyword id="KW-0677">Repeat</keyword>
<keyword id="KW-0833">Ubl conjugation pathway</keyword>
<comment type="function">
    <text>Probable substrate-specific adapter of CUL3-containing E3 ubiquitin-protein ligases which mediate the ubiquitination and subsequent proteasomal degradation of host target proteins.</text>
</comment>
<comment type="subunit">
    <text evidence="1">Interacts (via BTB domain) with host CUL3.</text>
</comment>
<comment type="subcellular location">
    <subcellularLocation>
        <location evidence="1">Host cytoplasm</location>
    </subcellularLocation>
</comment>
<comment type="domain">
    <text evidence="1">The BTB domain is responsible for the interaction with CUL3 while the Kelch repeat domains supposely serve to recruit the cellular substrates.</text>
</comment>